<sequence>MKNYLNFETDIKNLEIEIDKLKDPYNQDGLSEVDTKKISESQKEIDNKLQEIYSNLDPWQTTLVARHEDRPKAKFFIDNLFEDFIPLSGDRYYGEDKSVLAGFAKFDEKSVLVIGQEKGDSLESRIERNFGMMRPEGYRKTIRLMKLANKFNIPIISFIDTPGAYPGVGAEERGQAEAIAKSIECCMSLNVPTLAIVIGEGGSGGAIALASSNKVIMLENAIYSVISPEGCATILWRDPKRTLEAAKAMKLSSKDLLELKVIDEIIPEPIGGAHRDRDLILDNVRKSIEKNLNEFFNMSGEEIFNHRKNKFLTIGRSKGFVNQIDDLSTLSMKESKVNLFIKNFFKSKLNLAVLFGVIVLLGYFIFSL</sequence>
<dbReference type="EC" id="2.1.3.15" evidence="1"/>
<dbReference type="EMBL" id="CP000084">
    <property type="protein sequence ID" value="AAZ21333.1"/>
    <property type="molecule type" value="Genomic_DNA"/>
</dbReference>
<dbReference type="RefSeq" id="WP_011281763.1">
    <property type="nucleotide sequence ID" value="NC_007205.1"/>
</dbReference>
<dbReference type="SMR" id="Q4FNA6"/>
<dbReference type="STRING" id="335992.SAR11_0511"/>
<dbReference type="GeneID" id="66295013"/>
<dbReference type="KEGG" id="pub:SAR11_0511"/>
<dbReference type="eggNOG" id="COG0825">
    <property type="taxonomic scope" value="Bacteria"/>
</dbReference>
<dbReference type="HOGENOM" id="CLU_015486_0_2_5"/>
<dbReference type="OrthoDB" id="9808023at2"/>
<dbReference type="UniPathway" id="UPA00655">
    <property type="reaction ID" value="UER00711"/>
</dbReference>
<dbReference type="Proteomes" id="UP000002528">
    <property type="component" value="Chromosome"/>
</dbReference>
<dbReference type="GO" id="GO:0009317">
    <property type="term" value="C:acetyl-CoA carboxylase complex"/>
    <property type="evidence" value="ECO:0007669"/>
    <property type="project" value="InterPro"/>
</dbReference>
<dbReference type="GO" id="GO:0003989">
    <property type="term" value="F:acetyl-CoA carboxylase activity"/>
    <property type="evidence" value="ECO:0007669"/>
    <property type="project" value="InterPro"/>
</dbReference>
<dbReference type="GO" id="GO:0005524">
    <property type="term" value="F:ATP binding"/>
    <property type="evidence" value="ECO:0007669"/>
    <property type="project" value="UniProtKB-KW"/>
</dbReference>
<dbReference type="GO" id="GO:0016743">
    <property type="term" value="F:carboxyl- or carbamoyltransferase activity"/>
    <property type="evidence" value="ECO:0007669"/>
    <property type="project" value="UniProtKB-UniRule"/>
</dbReference>
<dbReference type="GO" id="GO:0006633">
    <property type="term" value="P:fatty acid biosynthetic process"/>
    <property type="evidence" value="ECO:0007669"/>
    <property type="project" value="UniProtKB-KW"/>
</dbReference>
<dbReference type="GO" id="GO:2001295">
    <property type="term" value="P:malonyl-CoA biosynthetic process"/>
    <property type="evidence" value="ECO:0007669"/>
    <property type="project" value="UniProtKB-UniRule"/>
</dbReference>
<dbReference type="Gene3D" id="3.90.226.10">
    <property type="entry name" value="2-enoyl-CoA Hydratase, Chain A, domain 1"/>
    <property type="match status" value="1"/>
</dbReference>
<dbReference type="HAMAP" id="MF_00823">
    <property type="entry name" value="AcetylCoA_CT_alpha"/>
    <property type="match status" value="1"/>
</dbReference>
<dbReference type="InterPro" id="IPR001095">
    <property type="entry name" value="Acetyl_CoA_COase_a_su"/>
</dbReference>
<dbReference type="InterPro" id="IPR029045">
    <property type="entry name" value="ClpP/crotonase-like_dom_sf"/>
</dbReference>
<dbReference type="InterPro" id="IPR011763">
    <property type="entry name" value="COA_CT_C"/>
</dbReference>
<dbReference type="NCBIfam" id="TIGR00513">
    <property type="entry name" value="accA"/>
    <property type="match status" value="1"/>
</dbReference>
<dbReference type="NCBIfam" id="NF041504">
    <property type="entry name" value="AccA_sub"/>
    <property type="match status" value="1"/>
</dbReference>
<dbReference type="NCBIfam" id="NF004344">
    <property type="entry name" value="PRK05724.1"/>
    <property type="match status" value="1"/>
</dbReference>
<dbReference type="PANTHER" id="PTHR42853">
    <property type="entry name" value="ACETYL-COENZYME A CARBOXYLASE CARBOXYL TRANSFERASE SUBUNIT ALPHA"/>
    <property type="match status" value="1"/>
</dbReference>
<dbReference type="PANTHER" id="PTHR42853:SF3">
    <property type="entry name" value="ACETYL-COENZYME A CARBOXYLASE CARBOXYL TRANSFERASE SUBUNIT ALPHA, CHLOROPLASTIC"/>
    <property type="match status" value="1"/>
</dbReference>
<dbReference type="Pfam" id="PF03255">
    <property type="entry name" value="ACCA"/>
    <property type="match status" value="1"/>
</dbReference>
<dbReference type="PRINTS" id="PR01069">
    <property type="entry name" value="ACCCTRFRASEA"/>
</dbReference>
<dbReference type="SUPFAM" id="SSF52096">
    <property type="entry name" value="ClpP/crotonase"/>
    <property type="match status" value="1"/>
</dbReference>
<dbReference type="PROSITE" id="PS50989">
    <property type="entry name" value="COA_CT_CTER"/>
    <property type="match status" value="1"/>
</dbReference>
<keyword id="KW-0067">ATP-binding</keyword>
<keyword id="KW-0963">Cytoplasm</keyword>
<keyword id="KW-0275">Fatty acid biosynthesis</keyword>
<keyword id="KW-0276">Fatty acid metabolism</keyword>
<keyword id="KW-0444">Lipid biosynthesis</keyword>
<keyword id="KW-0443">Lipid metabolism</keyword>
<keyword id="KW-0547">Nucleotide-binding</keyword>
<keyword id="KW-1185">Reference proteome</keyword>
<keyword id="KW-0808">Transferase</keyword>
<feature type="chain" id="PRO_0000223797" description="Acetyl-coenzyme A carboxylase carboxyl transferase subunit alpha">
    <location>
        <begin position="1"/>
        <end position="368"/>
    </location>
</feature>
<feature type="domain" description="CoA carboxyltransferase C-terminal" evidence="2">
    <location>
        <begin position="44"/>
        <end position="294"/>
    </location>
</feature>
<comment type="function">
    <text evidence="1">Component of the acetyl coenzyme A carboxylase (ACC) complex. First, biotin carboxylase catalyzes the carboxylation of biotin on its carrier protein (BCCP) and then the CO(2) group is transferred by the carboxyltransferase to acetyl-CoA to form malonyl-CoA.</text>
</comment>
<comment type="catalytic activity">
    <reaction evidence="1">
        <text>N(6)-carboxybiotinyl-L-lysyl-[protein] + acetyl-CoA = N(6)-biotinyl-L-lysyl-[protein] + malonyl-CoA</text>
        <dbReference type="Rhea" id="RHEA:54728"/>
        <dbReference type="Rhea" id="RHEA-COMP:10505"/>
        <dbReference type="Rhea" id="RHEA-COMP:10506"/>
        <dbReference type="ChEBI" id="CHEBI:57288"/>
        <dbReference type="ChEBI" id="CHEBI:57384"/>
        <dbReference type="ChEBI" id="CHEBI:83144"/>
        <dbReference type="ChEBI" id="CHEBI:83145"/>
        <dbReference type="EC" id="2.1.3.15"/>
    </reaction>
</comment>
<comment type="pathway">
    <text evidence="1">Lipid metabolism; malonyl-CoA biosynthesis; malonyl-CoA from acetyl-CoA: step 1/1.</text>
</comment>
<comment type="subunit">
    <text evidence="1">Acetyl-CoA carboxylase is a heterohexamer composed of biotin carboxyl carrier protein (AccB), biotin carboxylase (AccC) and two subunits each of ACCase subunit alpha (AccA) and ACCase subunit beta (AccD).</text>
</comment>
<comment type="subcellular location">
    <subcellularLocation>
        <location evidence="1">Cytoplasm</location>
    </subcellularLocation>
</comment>
<comment type="similarity">
    <text evidence="1">Belongs to the AccA family.</text>
</comment>
<name>ACCA_PELUB</name>
<gene>
    <name evidence="1" type="primary">accA</name>
    <name type="ordered locus">SAR11_0511</name>
</gene>
<proteinExistence type="inferred from homology"/>
<evidence type="ECO:0000255" key="1">
    <source>
        <dbReference type="HAMAP-Rule" id="MF_00823"/>
    </source>
</evidence>
<evidence type="ECO:0000255" key="2">
    <source>
        <dbReference type="PROSITE-ProRule" id="PRU01137"/>
    </source>
</evidence>
<reference key="1">
    <citation type="journal article" date="2005" name="Science">
        <title>Genome streamlining in a cosmopolitan oceanic bacterium.</title>
        <authorList>
            <person name="Giovannoni S.J."/>
            <person name="Tripp H.J."/>
            <person name="Givan S."/>
            <person name="Podar M."/>
            <person name="Vergin K.L."/>
            <person name="Baptista D."/>
            <person name="Bibbs L."/>
            <person name="Eads J."/>
            <person name="Richardson T.H."/>
            <person name="Noordewier M."/>
            <person name="Rappe M.S."/>
            <person name="Short J.M."/>
            <person name="Carrington J.C."/>
            <person name="Mathur E.J."/>
        </authorList>
    </citation>
    <scope>NUCLEOTIDE SEQUENCE [LARGE SCALE GENOMIC DNA]</scope>
    <source>
        <strain>HTCC1062</strain>
    </source>
</reference>
<protein>
    <recommendedName>
        <fullName evidence="1">Acetyl-coenzyme A carboxylase carboxyl transferase subunit alpha</fullName>
        <shortName evidence="1">ACCase subunit alpha</shortName>
        <shortName evidence="1">Acetyl-CoA carboxylase carboxyltransferase subunit alpha</shortName>
        <ecNumber evidence="1">2.1.3.15</ecNumber>
    </recommendedName>
</protein>
<accession>Q4FNA6</accession>
<organism>
    <name type="scientific">Pelagibacter ubique (strain HTCC1062)</name>
    <dbReference type="NCBI Taxonomy" id="335992"/>
    <lineage>
        <taxon>Bacteria</taxon>
        <taxon>Pseudomonadati</taxon>
        <taxon>Pseudomonadota</taxon>
        <taxon>Alphaproteobacteria</taxon>
        <taxon>Candidatus Pelagibacterales</taxon>
        <taxon>Candidatus Pelagibacteraceae</taxon>
        <taxon>Candidatus Pelagibacter</taxon>
    </lineage>
</organism>